<keyword id="KW-0342">GTP-binding</keyword>
<keyword id="KW-0378">Hydrolase</keyword>
<keyword id="KW-0479">Metal-binding</keyword>
<keyword id="KW-0547">Nucleotide-binding</keyword>
<keyword id="KW-0554">One-carbon metabolism</keyword>
<keyword id="KW-1185">Reference proteome</keyword>
<keyword id="KW-0862">Zinc</keyword>
<proteinExistence type="inferred from homology"/>
<sequence>MSSLSKEAALVHEALVARGLETPLRPPVHEMDNETRKRLISGHMTEIMQLLNLDLSDDSLMETPHRIAKMYVDEIFSGLDYANFPKITVIENKMKVDEMVTVRDITLTSTCEHHFVTIDGKATVAYIPKDSVIGLSKINRIVQFFAQRPQVQERLTQQILTALQTLLGTNNVAVSIDAVHYCVKARGIRDATSATTTTSLGGLFKSSQNTRQEFLRAVRHHN</sequence>
<accession>A8AE79</accession>
<comment type="catalytic activity">
    <reaction evidence="2">
        <text>GTP + H2O = 7,8-dihydroneopterin 3'-triphosphate + formate + H(+)</text>
        <dbReference type="Rhea" id="RHEA:17473"/>
        <dbReference type="ChEBI" id="CHEBI:15377"/>
        <dbReference type="ChEBI" id="CHEBI:15378"/>
        <dbReference type="ChEBI" id="CHEBI:15740"/>
        <dbReference type="ChEBI" id="CHEBI:37565"/>
        <dbReference type="ChEBI" id="CHEBI:58462"/>
        <dbReference type="EC" id="3.5.4.16"/>
    </reaction>
</comment>
<comment type="pathway">
    <text evidence="2">Cofactor biosynthesis; 7,8-dihydroneopterin triphosphate biosynthesis; 7,8-dihydroneopterin triphosphate from GTP: step 1/1.</text>
</comment>
<comment type="subunit">
    <text evidence="1">Toroid-shaped homodecamer, composed of two pentamers of five dimers.</text>
</comment>
<comment type="similarity">
    <text evidence="2">Belongs to the GTP cyclohydrolase I family.</text>
</comment>
<feature type="chain" id="PRO_1000043677" description="GTP cyclohydrolase 1">
    <location>
        <begin position="1"/>
        <end position="222"/>
    </location>
</feature>
<feature type="binding site" evidence="2">
    <location>
        <position position="111"/>
    </location>
    <ligand>
        <name>Zn(2+)</name>
        <dbReference type="ChEBI" id="CHEBI:29105"/>
    </ligand>
</feature>
<feature type="binding site" evidence="2">
    <location>
        <position position="114"/>
    </location>
    <ligand>
        <name>Zn(2+)</name>
        <dbReference type="ChEBI" id="CHEBI:29105"/>
    </ligand>
</feature>
<feature type="binding site" evidence="2">
    <location>
        <position position="182"/>
    </location>
    <ligand>
        <name>Zn(2+)</name>
        <dbReference type="ChEBI" id="CHEBI:29105"/>
    </ligand>
</feature>
<organism>
    <name type="scientific">Citrobacter koseri (strain ATCC BAA-895 / CDC 4225-83 / SGSC4696)</name>
    <dbReference type="NCBI Taxonomy" id="290338"/>
    <lineage>
        <taxon>Bacteria</taxon>
        <taxon>Pseudomonadati</taxon>
        <taxon>Pseudomonadota</taxon>
        <taxon>Gammaproteobacteria</taxon>
        <taxon>Enterobacterales</taxon>
        <taxon>Enterobacteriaceae</taxon>
        <taxon>Citrobacter</taxon>
    </lineage>
</organism>
<name>GCH1_CITK8</name>
<evidence type="ECO:0000250" key="1"/>
<evidence type="ECO:0000255" key="2">
    <source>
        <dbReference type="HAMAP-Rule" id="MF_00223"/>
    </source>
</evidence>
<protein>
    <recommendedName>
        <fullName evidence="2">GTP cyclohydrolase 1</fullName>
        <ecNumber evidence="2">3.5.4.16</ecNumber>
    </recommendedName>
    <alternativeName>
        <fullName evidence="2">GTP cyclohydrolase I</fullName>
        <shortName evidence="2">GTP-CH-I</shortName>
    </alternativeName>
</protein>
<dbReference type="EC" id="3.5.4.16" evidence="2"/>
<dbReference type="EMBL" id="CP000822">
    <property type="protein sequence ID" value="ABV11792.1"/>
    <property type="molecule type" value="Genomic_DNA"/>
</dbReference>
<dbReference type="RefSeq" id="WP_012131616.1">
    <property type="nucleotide sequence ID" value="NC_009792.1"/>
</dbReference>
<dbReference type="SMR" id="A8AE79"/>
<dbReference type="STRING" id="290338.CKO_00638"/>
<dbReference type="GeneID" id="92972543"/>
<dbReference type="KEGG" id="cko:CKO_00638"/>
<dbReference type="HOGENOM" id="CLU_049768_3_2_6"/>
<dbReference type="OrthoDB" id="9801207at2"/>
<dbReference type="UniPathway" id="UPA00848">
    <property type="reaction ID" value="UER00151"/>
</dbReference>
<dbReference type="Proteomes" id="UP000008148">
    <property type="component" value="Chromosome"/>
</dbReference>
<dbReference type="GO" id="GO:0005737">
    <property type="term" value="C:cytoplasm"/>
    <property type="evidence" value="ECO:0007669"/>
    <property type="project" value="TreeGrafter"/>
</dbReference>
<dbReference type="GO" id="GO:0005525">
    <property type="term" value="F:GTP binding"/>
    <property type="evidence" value="ECO:0007669"/>
    <property type="project" value="UniProtKB-KW"/>
</dbReference>
<dbReference type="GO" id="GO:0003934">
    <property type="term" value="F:GTP cyclohydrolase I activity"/>
    <property type="evidence" value="ECO:0007669"/>
    <property type="project" value="UniProtKB-UniRule"/>
</dbReference>
<dbReference type="GO" id="GO:0008270">
    <property type="term" value="F:zinc ion binding"/>
    <property type="evidence" value="ECO:0007669"/>
    <property type="project" value="UniProtKB-UniRule"/>
</dbReference>
<dbReference type="GO" id="GO:0006730">
    <property type="term" value="P:one-carbon metabolic process"/>
    <property type="evidence" value="ECO:0007669"/>
    <property type="project" value="UniProtKB-UniRule"/>
</dbReference>
<dbReference type="GO" id="GO:0006729">
    <property type="term" value="P:tetrahydrobiopterin biosynthetic process"/>
    <property type="evidence" value="ECO:0007669"/>
    <property type="project" value="TreeGrafter"/>
</dbReference>
<dbReference type="GO" id="GO:0046654">
    <property type="term" value="P:tetrahydrofolate biosynthetic process"/>
    <property type="evidence" value="ECO:0007669"/>
    <property type="project" value="UniProtKB-UniRule"/>
</dbReference>
<dbReference type="FunFam" id="1.10.286.10:FF:000002">
    <property type="entry name" value="GTP cyclohydrolase 1"/>
    <property type="match status" value="1"/>
</dbReference>
<dbReference type="FunFam" id="3.30.1130.10:FF:000001">
    <property type="entry name" value="GTP cyclohydrolase 1"/>
    <property type="match status" value="1"/>
</dbReference>
<dbReference type="Gene3D" id="1.10.286.10">
    <property type="match status" value="1"/>
</dbReference>
<dbReference type="Gene3D" id="3.30.1130.10">
    <property type="match status" value="1"/>
</dbReference>
<dbReference type="HAMAP" id="MF_00223">
    <property type="entry name" value="FolE"/>
    <property type="match status" value="1"/>
</dbReference>
<dbReference type="InterPro" id="IPR043133">
    <property type="entry name" value="GTP-CH-I_C/QueF"/>
</dbReference>
<dbReference type="InterPro" id="IPR043134">
    <property type="entry name" value="GTP-CH-I_N"/>
</dbReference>
<dbReference type="InterPro" id="IPR001474">
    <property type="entry name" value="GTP_CycHdrlase_I"/>
</dbReference>
<dbReference type="InterPro" id="IPR018234">
    <property type="entry name" value="GTP_CycHdrlase_I_CS"/>
</dbReference>
<dbReference type="InterPro" id="IPR020602">
    <property type="entry name" value="GTP_CycHdrlase_I_dom"/>
</dbReference>
<dbReference type="NCBIfam" id="TIGR00063">
    <property type="entry name" value="folE"/>
    <property type="match status" value="1"/>
</dbReference>
<dbReference type="NCBIfam" id="NF006824">
    <property type="entry name" value="PRK09347.1-1"/>
    <property type="match status" value="1"/>
</dbReference>
<dbReference type="NCBIfam" id="NF006825">
    <property type="entry name" value="PRK09347.1-2"/>
    <property type="match status" value="1"/>
</dbReference>
<dbReference type="NCBIfam" id="NF006826">
    <property type="entry name" value="PRK09347.1-3"/>
    <property type="match status" value="1"/>
</dbReference>
<dbReference type="PANTHER" id="PTHR11109:SF7">
    <property type="entry name" value="GTP CYCLOHYDROLASE 1"/>
    <property type="match status" value="1"/>
</dbReference>
<dbReference type="PANTHER" id="PTHR11109">
    <property type="entry name" value="GTP CYCLOHYDROLASE I"/>
    <property type="match status" value="1"/>
</dbReference>
<dbReference type="Pfam" id="PF01227">
    <property type="entry name" value="GTP_cyclohydroI"/>
    <property type="match status" value="1"/>
</dbReference>
<dbReference type="SUPFAM" id="SSF55620">
    <property type="entry name" value="Tetrahydrobiopterin biosynthesis enzymes-like"/>
    <property type="match status" value="1"/>
</dbReference>
<dbReference type="PROSITE" id="PS00859">
    <property type="entry name" value="GTP_CYCLOHYDROL_1_1"/>
    <property type="match status" value="1"/>
</dbReference>
<dbReference type="PROSITE" id="PS00860">
    <property type="entry name" value="GTP_CYCLOHYDROL_1_2"/>
    <property type="match status" value="1"/>
</dbReference>
<gene>
    <name evidence="2" type="primary">folE</name>
    <name type="ordered locus">CKO_00638</name>
</gene>
<reference key="1">
    <citation type="submission" date="2007-08" db="EMBL/GenBank/DDBJ databases">
        <authorList>
            <consortium name="The Citrobacter koseri Genome Sequencing Project"/>
            <person name="McClelland M."/>
            <person name="Sanderson E.K."/>
            <person name="Porwollik S."/>
            <person name="Spieth J."/>
            <person name="Clifton W.S."/>
            <person name="Latreille P."/>
            <person name="Courtney L."/>
            <person name="Wang C."/>
            <person name="Pepin K."/>
            <person name="Bhonagiri V."/>
            <person name="Nash W."/>
            <person name="Johnson M."/>
            <person name="Thiruvilangam P."/>
            <person name="Wilson R."/>
        </authorList>
    </citation>
    <scope>NUCLEOTIDE SEQUENCE [LARGE SCALE GENOMIC DNA]</scope>
    <source>
        <strain>ATCC BAA-895 / CDC 4225-83 / SGSC4696</strain>
    </source>
</reference>